<reference key="1">
    <citation type="submission" date="2006-08" db="EMBL/GenBank/DDBJ databases">
        <title>Positive selection in transcription factor genes on the human lineage.</title>
        <authorList>
            <person name="Nickel G.C."/>
            <person name="Tefft D.L."/>
            <person name="Trevarthen K."/>
            <person name="Funt J."/>
            <person name="Adams M.D."/>
        </authorList>
    </citation>
    <scope>NUCLEOTIDE SEQUENCE [GENOMIC DNA]</scope>
</reference>
<gene>
    <name type="primary">RAX2</name>
    <name type="synonym">RAXL1</name>
</gene>
<comment type="function">
    <text evidence="1">May be involved in modulating the expression of photoreceptor specific genes. Binds to the Ret-1 and Bat-1 element within the rhodopsin promoter (By similarity).</text>
</comment>
<comment type="subunit">
    <text evidence="1">Interacts with CRX.</text>
</comment>
<comment type="subcellular location">
    <subcellularLocation>
        <location evidence="2">Nucleus</location>
    </subcellularLocation>
</comment>
<comment type="domain">
    <text evidence="1">The Homeobox transactivates the Ret-1 element in the presence of CRX and NRL.</text>
</comment>
<feature type="chain" id="PRO_0000285049" description="Retina and anterior neural fold homeobox protein 2">
    <location>
        <begin position="1"/>
        <end position="184"/>
    </location>
</feature>
<feature type="DNA-binding region" description="Homeobox" evidence="2">
    <location>
        <begin position="27"/>
        <end position="86"/>
    </location>
</feature>
<feature type="region of interest" description="Disordered" evidence="3">
    <location>
        <begin position="1"/>
        <end position="31"/>
    </location>
</feature>
<feature type="compositionally biased region" description="Low complexity" evidence="3">
    <location>
        <begin position="1"/>
        <end position="10"/>
    </location>
</feature>
<proteinExistence type="inferred from homology"/>
<dbReference type="EMBL" id="DQ977206">
    <property type="protein sequence ID" value="ABM54250.1"/>
    <property type="molecule type" value="Genomic_DNA"/>
</dbReference>
<dbReference type="STRING" id="9597.ENSPPAP00000032503"/>
<dbReference type="eggNOG" id="KOG0490">
    <property type="taxonomic scope" value="Eukaryota"/>
</dbReference>
<dbReference type="Proteomes" id="UP000240080">
    <property type="component" value="Unplaced"/>
</dbReference>
<dbReference type="GO" id="GO:0005634">
    <property type="term" value="C:nucleus"/>
    <property type="evidence" value="ECO:0007669"/>
    <property type="project" value="UniProtKB-SubCell"/>
</dbReference>
<dbReference type="GO" id="GO:0000981">
    <property type="term" value="F:DNA-binding transcription factor activity, RNA polymerase II-specific"/>
    <property type="evidence" value="ECO:0007669"/>
    <property type="project" value="InterPro"/>
</dbReference>
<dbReference type="GO" id="GO:0000978">
    <property type="term" value="F:RNA polymerase II cis-regulatory region sequence-specific DNA binding"/>
    <property type="evidence" value="ECO:0007669"/>
    <property type="project" value="TreeGrafter"/>
</dbReference>
<dbReference type="GO" id="GO:0045944">
    <property type="term" value="P:positive regulation of transcription by RNA polymerase II"/>
    <property type="evidence" value="ECO:0007669"/>
    <property type="project" value="InterPro"/>
</dbReference>
<dbReference type="GO" id="GO:0007601">
    <property type="term" value="P:visual perception"/>
    <property type="evidence" value="ECO:0007669"/>
    <property type="project" value="UniProtKB-KW"/>
</dbReference>
<dbReference type="CDD" id="cd00086">
    <property type="entry name" value="homeodomain"/>
    <property type="match status" value="1"/>
</dbReference>
<dbReference type="FunFam" id="1.10.10.60:FF:000071">
    <property type="entry name" value="Retinal homeobox gene 2"/>
    <property type="match status" value="1"/>
</dbReference>
<dbReference type="Gene3D" id="1.10.10.60">
    <property type="entry name" value="Homeodomain-like"/>
    <property type="match status" value="1"/>
</dbReference>
<dbReference type="InterPro" id="IPR001356">
    <property type="entry name" value="HD"/>
</dbReference>
<dbReference type="InterPro" id="IPR017970">
    <property type="entry name" value="Homeobox_CS"/>
</dbReference>
<dbReference type="InterPro" id="IPR009057">
    <property type="entry name" value="Homeodomain-like_sf"/>
</dbReference>
<dbReference type="InterPro" id="IPR043562">
    <property type="entry name" value="RAX/RAX2"/>
</dbReference>
<dbReference type="PANTHER" id="PTHR46271">
    <property type="entry name" value="HOMEOBOX PROTEIN, PUTATIVE-RELATED"/>
    <property type="match status" value="1"/>
</dbReference>
<dbReference type="PANTHER" id="PTHR46271:SF2">
    <property type="entry name" value="RETINA AND ANTERIOR NEURAL FOLD HOMEOBOX PROTEIN 2"/>
    <property type="match status" value="1"/>
</dbReference>
<dbReference type="Pfam" id="PF00046">
    <property type="entry name" value="Homeodomain"/>
    <property type="match status" value="1"/>
</dbReference>
<dbReference type="SMART" id="SM00389">
    <property type="entry name" value="HOX"/>
    <property type="match status" value="1"/>
</dbReference>
<dbReference type="SUPFAM" id="SSF46689">
    <property type="entry name" value="Homeodomain-like"/>
    <property type="match status" value="1"/>
</dbReference>
<dbReference type="PROSITE" id="PS00027">
    <property type="entry name" value="HOMEOBOX_1"/>
    <property type="match status" value="1"/>
</dbReference>
<dbReference type="PROSITE" id="PS50071">
    <property type="entry name" value="HOMEOBOX_2"/>
    <property type="match status" value="1"/>
</dbReference>
<protein>
    <recommendedName>
        <fullName>Retina and anterior neural fold homeobox protein 2</fullName>
    </recommendedName>
    <alternativeName>
        <fullName>Retina and anterior neural fold homeobox-like protein 1</fullName>
    </alternativeName>
</protein>
<evidence type="ECO:0000250" key="1"/>
<evidence type="ECO:0000255" key="2">
    <source>
        <dbReference type="PROSITE-ProRule" id="PRU00108"/>
    </source>
</evidence>
<evidence type="ECO:0000256" key="3">
    <source>
        <dbReference type="SAM" id="MobiDB-lite"/>
    </source>
</evidence>
<organism>
    <name type="scientific">Pan paniscus</name>
    <name type="common">Pygmy chimpanzee</name>
    <name type="synonym">Bonobo</name>
    <dbReference type="NCBI Taxonomy" id="9597"/>
    <lineage>
        <taxon>Eukaryota</taxon>
        <taxon>Metazoa</taxon>
        <taxon>Chordata</taxon>
        <taxon>Craniata</taxon>
        <taxon>Vertebrata</taxon>
        <taxon>Euteleostomi</taxon>
        <taxon>Mammalia</taxon>
        <taxon>Eutheria</taxon>
        <taxon>Euarchontoglires</taxon>
        <taxon>Primates</taxon>
        <taxon>Haplorrhini</taxon>
        <taxon>Catarrhini</taxon>
        <taxon>Hominidae</taxon>
        <taxon>Pan</taxon>
    </lineage>
</organism>
<accession>A1YG25</accession>
<sequence length="184" mass="20068">MFLSPGXGPATEGGGLGPGEEAPKKKHRRNRTTFTTYQLHQLERAFEASHYPDVYSREELAAKVHLPEVRVQVWFQNRRAKWRRQERLESGSGAVAAPRLPEAPALPFARPPAMSLPLEPWLGPGPPAVPGLPRLLGPGPGLQASFGPHAFAPTFADGFALEEASLRLLAKEHAQALDRAWPPA</sequence>
<keyword id="KW-0238">DNA-binding</keyword>
<keyword id="KW-0371">Homeobox</keyword>
<keyword id="KW-0539">Nucleus</keyword>
<keyword id="KW-1185">Reference proteome</keyword>
<keyword id="KW-0716">Sensory transduction</keyword>
<keyword id="KW-0804">Transcription</keyword>
<keyword id="KW-0805">Transcription regulation</keyword>
<keyword id="KW-0844">Vision</keyword>
<name>RAX2_PANPA</name>